<accession>Q9QZD5</accession>
<accession>Q0VF88</accession>
<accession>Q8CH16</accession>
<dbReference type="EMBL" id="AF189156">
    <property type="protein sequence ID" value="AAF01059.1"/>
    <property type="molecule type" value="Genomic_DNA"/>
</dbReference>
<dbReference type="EMBL" id="AF482427">
    <property type="protein sequence ID" value="AAO15718.1"/>
    <property type="molecule type" value="Genomic_DNA"/>
</dbReference>
<dbReference type="EMBL" id="BC118932">
    <property type="protein sequence ID" value="AAI18933.1"/>
    <property type="molecule type" value="mRNA"/>
</dbReference>
<dbReference type="CCDS" id="CCDS35796.1"/>
<dbReference type="RefSeq" id="NP_067325.2">
    <property type="nucleotide sequence ID" value="NM_021350.2"/>
</dbReference>
<dbReference type="SMR" id="Q9QZD5"/>
<dbReference type="FunCoup" id="Q9QZD5">
    <property type="interactions" value="2086"/>
</dbReference>
<dbReference type="STRING" id="10090.ENSMUSP00000100600"/>
<dbReference type="GlyGen" id="Q9QZD5">
    <property type="glycosylation" value="1 site"/>
</dbReference>
<dbReference type="iPTMnet" id="Q9QZD5"/>
<dbReference type="PhosphoSitePlus" id="Q9QZD5"/>
<dbReference type="PaxDb" id="10090-ENSMUSP00000100600"/>
<dbReference type="PeptideAtlas" id="Q9QZD5"/>
<dbReference type="ProteomicsDB" id="300347"/>
<dbReference type="Pumba" id="Q9QZD5"/>
<dbReference type="DNASU" id="12663"/>
<dbReference type="GeneID" id="12663"/>
<dbReference type="KEGG" id="mmu:12663"/>
<dbReference type="UCSC" id="uc007dtr.2">
    <property type="organism name" value="mouse"/>
</dbReference>
<dbReference type="AGR" id="MGI:101913"/>
<dbReference type="CTD" id="1122"/>
<dbReference type="MGI" id="MGI:101913">
    <property type="gene designation" value="Chml"/>
</dbReference>
<dbReference type="eggNOG" id="KOG4405">
    <property type="taxonomic scope" value="Eukaryota"/>
</dbReference>
<dbReference type="InParanoid" id="Q9QZD5"/>
<dbReference type="OrthoDB" id="1923006at2759"/>
<dbReference type="PhylomeDB" id="Q9QZD5"/>
<dbReference type="TreeFam" id="TF320813"/>
<dbReference type="Reactome" id="R-MMU-8873719">
    <property type="pathway name" value="RAB geranylgeranylation"/>
</dbReference>
<dbReference type="Reactome" id="R-MMU-8876198">
    <property type="pathway name" value="RAB GEFs exchange GTP for GDP on RABs"/>
</dbReference>
<dbReference type="BioGRID-ORCS" id="12663">
    <property type="hits" value="2 hits in 80 CRISPR screens"/>
</dbReference>
<dbReference type="PRO" id="PR:Q9QZD5"/>
<dbReference type="Proteomes" id="UP000000589">
    <property type="component" value="Unplaced"/>
</dbReference>
<dbReference type="RNAct" id="Q9QZD5">
    <property type="molecule type" value="protein"/>
</dbReference>
<dbReference type="GO" id="GO:0005829">
    <property type="term" value="C:cytosol"/>
    <property type="evidence" value="ECO:0007669"/>
    <property type="project" value="UniProtKB-SubCell"/>
</dbReference>
<dbReference type="GO" id="GO:0005968">
    <property type="term" value="C:Rab-protein geranylgeranyltransferase complex"/>
    <property type="evidence" value="ECO:0000250"/>
    <property type="project" value="UniProtKB"/>
</dbReference>
<dbReference type="GO" id="GO:0005092">
    <property type="term" value="F:GDP-dissociation inhibitor activity"/>
    <property type="evidence" value="ECO:0007669"/>
    <property type="project" value="InterPro"/>
</dbReference>
<dbReference type="GO" id="GO:0005096">
    <property type="term" value="F:GTPase activator activity"/>
    <property type="evidence" value="ECO:0007669"/>
    <property type="project" value="UniProtKB-KW"/>
</dbReference>
<dbReference type="GO" id="GO:0031267">
    <property type="term" value="F:small GTPase binding"/>
    <property type="evidence" value="ECO:0000250"/>
    <property type="project" value="UniProtKB"/>
</dbReference>
<dbReference type="GO" id="GO:0006886">
    <property type="term" value="P:intracellular protein transport"/>
    <property type="evidence" value="ECO:0007669"/>
    <property type="project" value="InterPro"/>
</dbReference>
<dbReference type="GO" id="GO:0018344">
    <property type="term" value="P:protein geranylgeranylation"/>
    <property type="evidence" value="ECO:0000250"/>
    <property type="project" value="UniProtKB"/>
</dbReference>
<dbReference type="GO" id="GO:0007264">
    <property type="term" value="P:small GTPase-mediated signal transduction"/>
    <property type="evidence" value="ECO:0007669"/>
    <property type="project" value="InterPro"/>
</dbReference>
<dbReference type="FunFam" id="1.10.405.10:FF:000003">
    <property type="entry name" value="Rab proteins geranylgeranyltransferase component A"/>
    <property type="match status" value="1"/>
</dbReference>
<dbReference type="FunFam" id="3.50.50.60:FF:000108">
    <property type="entry name" value="Rab proteins geranylgeranyltransferase component A"/>
    <property type="match status" value="1"/>
</dbReference>
<dbReference type="Gene3D" id="3.50.50.60">
    <property type="entry name" value="FAD/NAD(P)-binding domain"/>
    <property type="match status" value="2"/>
</dbReference>
<dbReference type="Gene3D" id="1.10.405.10">
    <property type="entry name" value="Guanine Nucleotide Dissociation Inhibitor, domain 1"/>
    <property type="match status" value="1"/>
</dbReference>
<dbReference type="Gene3D" id="3.30.519.10">
    <property type="entry name" value="Guanine Nucleotide Dissociation Inhibitor, domain 2"/>
    <property type="match status" value="1"/>
</dbReference>
<dbReference type="InterPro" id="IPR036188">
    <property type="entry name" value="FAD/NAD-bd_sf"/>
</dbReference>
<dbReference type="InterPro" id="IPR018203">
    <property type="entry name" value="GDP_dissociation_inhibitor"/>
</dbReference>
<dbReference type="InterPro" id="IPR001738">
    <property type="entry name" value="Rab_escort"/>
</dbReference>
<dbReference type="InterPro" id="IPR054420">
    <property type="entry name" value="RAE1_2_domI_C"/>
</dbReference>
<dbReference type="PANTHER" id="PTHR11787">
    <property type="entry name" value="RAB GDP-DISSOCIATION INHIBITOR"/>
    <property type="match status" value="1"/>
</dbReference>
<dbReference type="PANTHER" id="PTHR11787:SF9">
    <property type="entry name" value="RAB PROTEINS GERANYLGERANYLTRANSFERASE COMPONENT A 2"/>
    <property type="match status" value="1"/>
</dbReference>
<dbReference type="Pfam" id="PF00996">
    <property type="entry name" value="GDI"/>
    <property type="match status" value="1"/>
</dbReference>
<dbReference type="Pfam" id="PF22603">
    <property type="entry name" value="RAE1_2_domI_C"/>
    <property type="match status" value="1"/>
</dbReference>
<dbReference type="PIRSF" id="PIRSF016550">
    <property type="entry name" value="Rab_ger_ger_transf_A_euk"/>
    <property type="match status" value="1"/>
</dbReference>
<dbReference type="PRINTS" id="PR00893">
    <property type="entry name" value="RABESCORT"/>
</dbReference>
<dbReference type="PRINTS" id="PR00891">
    <property type="entry name" value="RABGDIREP"/>
</dbReference>
<dbReference type="SUPFAM" id="SSF54373">
    <property type="entry name" value="FAD-linked reductases, C-terminal domain"/>
    <property type="match status" value="1"/>
</dbReference>
<dbReference type="SUPFAM" id="SSF51905">
    <property type="entry name" value="FAD/NAD(P)-binding domain"/>
    <property type="match status" value="1"/>
</dbReference>
<sequence length="621" mass="70010">MAEKLPTEFDVVIIGTGLPESILAAACSRSGQRVLHVDSRSYYGGNWASFSFTGLQSWLKDYQQNHDSEEGVTATWQDLIHETEEAISLRKKDETIQHTEVFCYASQDVEDSVQDTETLQRSSPLEASATPADSLDSASLPKERQSAYSTSYEVPSRHTEESDRELSLPSANVEDSLEKEKYCGDKTDMHTVSGEDKGEHKLVVQDSIEQPKRNRITYSQMVKESRRFNIDLVSKPLYSQGSLIDLLIKSNVSRYAEFKNVTRILAFWEGKVEQVPCSRADVFNSKELSMVEKRMLMKFLTFCLDYEQHSDEYQDFKQCSFSDYLKTKKLTPNLQHFILHSIAMTSESSCTTLDGLQATKNFLQCLGRFGNTPFIFPLYGHGEIPQCFCRMCAVFGGVYCLRHKVQCLVVDKDSGRCKGIIDAFGQRISANYFIVEDSYLPKETCSNVQYKQISRAVLITDQSILKTDSDQQISILVVPPLEPGTTSVRVMELCSSTMTCMKDSYLVHLTCSSSKTAREDLEPVVKQLFIPEAEAEAGKDELRKPRLLWALYFNMRDSSGVSRSSYCGLPSNVYICSGPDWGLGSEHAVKQAETLFQEIFPSEEFCPPPPNPEDIIFEAEG</sequence>
<reference key="1">
    <citation type="submission" date="1999-09" db="EMBL/GenBank/DDBJ databases">
        <title>Cloning and sequencing of the mouse REP2 gene.</title>
        <authorList>
            <person name="Gegg M."/>
            <person name="Tolmachova T."/>
            <person name="Seabra M.C."/>
        </authorList>
    </citation>
    <scope>NUCLEOTIDE SEQUENCE [GENOMIC DNA]</scope>
    <source>
        <strain>129/SvJ</strain>
    </source>
</reference>
<reference key="2">
    <citation type="journal article" date="2002" name="Gene">
        <title>Different structural organization of the encephalopsin gene in man and mouse.</title>
        <authorList>
            <person name="Kasper G."/>
            <person name="Taudien S."/>
            <person name="Staub E."/>
            <person name="Mennerich D."/>
            <person name="Rieder M."/>
            <person name="Hinzmann B."/>
            <person name="Dahl E."/>
            <person name="Schwidetzky U."/>
            <person name="Rosenthal A."/>
            <person name="Rump A."/>
        </authorList>
    </citation>
    <scope>NUCLEOTIDE SEQUENCE [GENOMIC DNA]</scope>
    <source>
        <strain>C57BL/6J</strain>
    </source>
</reference>
<reference key="3">
    <citation type="journal article" date="2004" name="Genome Res.">
        <title>The status, quality, and expansion of the NIH full-length cDNA project: the Mammalian Gene Collection (MGC).</title>
        <authorList>
            <consortium name="The MGC Project Team"/>
        </authorList>
    </citation>
    <scope>NUCLEOTIDE SEQUENCE [LARGE SCALE MRNA]</scope>
</reference>
<organism>
    <name type="scientific">Mus musculus</name>
    <name type="common">Mouse</name>
    <dbReference type="NCBI Taxonomy" id="10090"/>
    <lineage>
        <taxon>Eukaryota</taxon>
        <taxon>Metazoa</taxon>
        <taxon>Chordata</taxon>
        <taxon>Craniata</taxon>
        <taxon>Vertebrata</taxon>
        <taxon>Euteleostomi</taxon>
        <taxon>Mammalia</taxon>
        <taxon>Eutheria</taxon>
        <taxon>Euarchontoglires</taxon>
        <taxon>Glires</taxon>
        <taxon>Rodentia</taxon>
        <taxon>Myomorpha</taxon>
        <taxon>Muroidea</taxon>
        <taxon>Muridae</taxon>
        <taxon>Murinae</taxon>
        <taxon>Mus</taxon>
        <taxon>Mus</taxon>
    </lineage>
</organism>
<evidence type="ECO:0000250" key="1"/>
<evidence type="ECO:0000250" key="2">
    <source>
        <dbReference type="UniProtKB" id="P26374"/>
    </source>
</evidence>
<evidence type="ECO:0000256" key="3">
    <source>
        <dbReference type="SAM" id="MobiDB-lite"/>
    </source>
</evidence>
<evidence type="ECO:0000305" key="4"/>
<name>RAE2_MOUSE</name>
<proteinExistence type="evidence at transcript level"/>
<keyword id="KW-0963">Cytoplasm</keyword>
<keyword id="KW-0343">GTPase activation</keyword>
<keyword id="KW-1185">Reference proteome</keyword>
<gene>
    <name type="primary">Chml</name>
    <name type="synonym">Rep2</name>
</gene>
<feature type="chain" id="PRO_0000056690" description="Rab proteins geranylgeranyltransferase component A 2">
    <location>
        <begin position="1"/>
        <end position="621"/>
    </location>
</feature>
<feature type="region of interest" description="Disordered" evidence="3">
    <location>
        <begin position="113"/>
        <end position="171"/>
    </location>
</feature>
<feature type="compositionally biased region" description="Polar residues" evidence="3">
    <location>
        <begin position="115"/>
        <end position="125"/>
    </location>
</feature>
<feature type="compositionally biased region" description="Basic and acidic residues" evidence="3">
    <location>
        <begin position="155"/>
        <end position="166"/>
    </location>
</feature>
<feature type="sequence conflict" description="In Ref. 1; AAF01059." evidence="4" ref="1">
    <original>T</original>
    <variation>P</variation>
    <location>
        <position position="351"/>
    </location>
</feature>
<feature type="sequence conflict" description="In Ref. 2; AAO15718." evidence="4" ref="2">
    <original>N</original>
    <variation>T</variation>
    <location>
        <position position="361"/>
    </location>
</feature>
<protein>
    <recommendedName>
        <fullName>Rab proteins geranylgeranyltransferase component A 2</fullName>
    </recommendedName>
    <alternativeName>
        <fullName>Choroideremia-like protein</fullName>
    </alternativeName>
    <alternativeName>
        <fullName>Rab escort protein 2</fullName>
        <shortName>REP-2</shortName>
    </alternativeName>
</protein>
<comment type="function">
    <text evidence="1">Substrate-binding subunit (component A) of the Rab geranylgeranyltransferase (GGTase) complex. Binds unprenylated Rab proteins and presents the substrate peptide to the catalytic component B. The component A is thought to be regenerated by transferring its prenylated Rab back to the donor membrane. Less effective than CHM in supporting prenylation of Rab3 family (By similarity).</text>
</comment>
<comment type="subunit">
    <text evidence="2">Monomer. Heterotrimer composed of RABGGTA, RABGGTB and CHML; within this trimer, RABGGTA and RABGGTB form the catalytic component B, while CHML (component A) mediates Rab protein binding. Interacts with RAB1A, RAB7A and RAB27A, but has much lower affinity for RAB1A, RAB7A and RAB27A than CHM (By similarity). Interacts with the non-phosphorylated forms of RAB3A, RAB3B, RAB3C, RAB3D, RAB5B, RAB5C, RAB8A, RAB8B, RAB10, RAB12, RAB35, and RAB43 (By similarity).</text>
</comment>
<comment type="subcellular location">
    <subcellularLocation>
        <location evidence="1">Cytoplasm</location>
        <location evidence="1">Cytosol</location>
    </subcellularLocation>
</comment>
<comment type="similarity">
    <text evidence="4">Belongs to the Rab GDI family.</text>
</comment>